<comment type="function">
    <text evidence="1">The glycine cleavage system catalyzes the degradation of glycine.</text>
</comment>
<comment type="catalytic activity">
    <reaction evidence="1">
        <text>N(6)-[(R)-S(8)-aminomethyldihydrolipoyl]-L-lysyl-[protein] + (6S)-5,6,7,8-tetrahydrofolate = N(6)-[(R)-dihydrolipoyl]-L-lysyl-[protein] + (6R)-5,10-methylene-5,6,7,8-tetrahydrofolate + NH4(+)</text>
        <dbReference type="Rhea" id="RHEA:16945"/>
        <dbReference type="Rhea" id="RHEA-COMP:10475"/>
        <dbReference type="Rhea" id="RHEA-COMP:10492"/>
        <dbReference type="ChEBI" id="CHEBI:15636"/>
        <dbReference type="ChEBI" id="CHEBI:28938"/>
        <dbReference type="ChEBI" id="CHEBI:57453"/>
        <dbReference type="ChEBI" id="CHEBI:83100"/>
        <dbReference type="ChEBI" id="CHEBI:83143"/>
        <dbReference type="EC" id="2.1.2.10"/>
    </reaction>
</comment>
<comment type="subunit">
    <text evidence="1">The glycine cleavage system is composed of four proteins: P, T, L and H.</text>
</comment>
<comment type="similarity">
    <text evidence="1">Belongs to the GcvT family.</text>
</comment>
<feature type="chain" id="PRO_1000114090" description="Aminomethyltransferase">
    <location>
        <begin position="1"/>
        <end position="370"/>
    </location>
</feature>
<name>GCST_CLOBM</name>
<accession>B1KWD5</accession>
<keyword id="KW-0032">Aminotransferase</keyword>
<keyword id="KW-0808">Transferase</keyword>
<proteinExistence type="inferred from homology"/>
<protein>
    <recommendedName>
        <fullName evidence="1">Aminomethyltransferase</fullName>
        <ecNumber evidence="1">2.1.2.10</ecNumber>
    </recommendedName>
    <alternativeName>
        <fullName evidence="1">Glycine cleavage system T protein</fullName>
    </alternativeName>
</protein>
<reference key="1">
    <citation type="journal article" date="2007" name="PLoS ONE">
        <title>Analysis of the neurotoxin complex genes in Clostridium botulinum A1-A4 and B1 strains: BoNT/A3, /Ba4 and /B1 clusters are located within plasmids.</title>
        <authorList>
            <person name="Smith T.J."/>
            <person name="Hill K.K."/>
            <person name="Foley B.T."/>
            <person name="Detter J.C."/>
            <person name="Munk A.C."/>
            <person name="Bruce D.C."/>
            <person name="Doggett N.A."/>
            <person name="Smith L.A."/>
            <person name="Marks J.D."/>
            <person name="Xie G."/>
            <person name="Brettin T.S."/>
        </authorList>
    </citation>
    <scope>NUCLEOTIDE SEQUENCE [LARGE SCALE GENOMIC DNA]</scope>
    <source>
        <strain>Loch Maree / Type A3</strain>
    </source>
</reference>
<evidence type="ECO:0000255" key="1">
    <source>
        <dbReference type="HAMAP-Rule" id="MF_00259"/>
    </source>
</evidence>
<sequence length="370" mass="41553">MEGLKVTPLRGVYEEYGGKIVDFAGYELPTQFKGFLHEHHTVREKAGLFDVSHMGEAMVTGKDAGKFIQYLMTNDINVLKDNEVLYTFMCNEDGGVIDDLLVYKFAEDEFFLVINASNKDKDVKWIMDHKGDFDVEIADVSDSIAQLALQGPLAEEILQKIVDVDLQEIKFFKLRRDVLVDGKKCLVSRTGYTGEDGFEIYCKPEDAKGLWHAILNAGKEEGAQPIGLGARDTLRFEASLLLYGNEMDETITPLEVGMGFFVKLKVEEDFIGKDALIKQKAEGVTRKLVGFELIDKGIPRHGYEVIKDGKVIGHVTTGYKSPTLNKAIGLALVEEQYSKIGTEFNIKVRKKELKAVAIDKRFYTKKTKTK</sequence>
<gene>
    <name evidence="1" type="primary">gcvT</name>
    <name type="ordered locus">CLK_0097</name>
</gene>
<dbReference type="EC" id="2.1.2.10" evidence="1"/>
<dbReference type="EMBL" id="CP000962">
    <property type="protein sequence ID" value="ACA55890.1"/>
    <property type="molecule type" value="Genomic_DNA"/>
</dbReference>
<dbReference type="RefSeq" id="WP_012343814.1">
    <property type="nucleotide sequence ID" value="NC_010520.1"/>
</dbReference>
<dbReference type="SMR" id="B1KWD5"/>
<dbReference type="KEGG" id="cbl:CLK_0097"/>
<dbReference type="HOGENOM" id="CLU_007884_10_2_9"/>
<dbReference type="GO" id="GO:0005829">
    <property type="term" value="C:cytosol"/>
    <property type="evidence" value="ECO:0007669"/>
    <property type="project" value="TreeGrafter"/>
</dbReference>
<dbReference type="GO" id="GO:0005960">
    <property type="term" value="C:glycine cleavage complex"/>
    <property type="evidence" value="ECO:0007669"/>
    <property type="project" value="InterPro"/>
</dbReference>
<dbReference type="GO" id="GO:0004047">
    <property type="term" value="F:aminomethyltransferase activity"/>
    <property type="evidence" value="ECO:0007669"/>
    <property type="project" value="UniProtKB-UniRule"/>
</dbReference>
<dbReference type="GO" id="GO:0008483">
    <property type="term" value="F:transaminase activity"/>
    <property type="evidence" value="ECO:0007669"/>
    <property type="project" value="UniProtKB-KW"/>
</dbReference>
<dbReference type="GO" id="GO:0019464">
    <property type="term" value="P:glycine decarboxylation via glycine cleavage system"/>
    <property type="evidence" value="ECO:0007669"/>
    <property type="project" value="UniProtKB-UniRule"/>
</dbReference>
<dbReference type="FunFam" id="2.40.30.110:FF:000014">
    <property type="entry name" value="Aminomethyltransferase"/>
    <property type="match status" value="1"/>
</dbReference>
<dbReference type="FunFam" id="3.30.70.1400:FF:000001">
    <property type="entry name" value="Aminomethyltransferase"/>
    <property type="match status" value="1"/>
</dbReference>
<dbReference type="FunFam" id="4.10.1250.10:FF:000001">
    <property type="entry name" value="Aminomethyltransferase"/>
    <property type="match status" value="1"/>
</dbReference>
<dbReference type="Gene3D" id="2.40.30.110">
    <property type="entry name" value="Aminomethyltransferase beta-barrel domains"/>
    <property type="match status" value="1"/>
</dbReference>
<dbReference type="Gene3D" id="3.30.70.1400">
    <property type="entry name" value="Aminomethyltransferase beta-barrel domains"/>
    <property type="match status" value="1"/>
</dbReference>
<dbReference type="Gene3D" id="4.10.1250.10">
    <property type="entry name" value="Aminomethyltransferase fragment"/>
    <property type="match status" value="1"/>
</dbReference>
<dbReference type="Gene3D" id="3.30.1360.120">
    <property type="entry name" value="Probable tRNA modification gtpase trme, domain 1"/>
    <property type="match status" value="1"/>
</dbReference>
<dbReference type="HAMAP" id="MF_00259">
    <property type="entry name" value="GcvT"/>
    <property type="match status" value="1"/>
</dbReference>
<dbReference type="InterPro" id="IPR006223">
    <property type="entry name" value="GCS_T"/>
</dbReference>
<dbReference type="InterPro" id="IPR022903">
    <property type="entry name" value="GCS_T_bac"/>
</dbReference>
<dbReference type="InterPro" id="IPR013977">
    <property type="entry name" value="GCST_C"/>
</dbReference>
<dbReference type="InterPro" id="IPR006222">
    <property type="entry name" value="GCV_T_N"/>
</dbReference>
<dbReference type="InterPro" id="IPR028896">
    <property type="entry name" value="GcvT/YgfZ/DmdA"/>
</dbReference>
<dbReference type="InterPro" id="IPR029043">
    <property type="entry name" value="GcvT/YgfZ_C"/>
</dbReference>
<dbReference type="InterPro" id="IPR027266">
    <property type="entry name" value="TrmE/GcvT_dom1"/>
</dbReference>
<dbReference type="NCBIfam" id="TIGR00528">
    <property type="entry name" value="gcvT"/>
    <property type="match status" value="1"/>
</dbReference>
<dbReference type="NCBIfam" id="NF001567">
    <property type="entry name" value="PRK00389.1"/>
    <property type="match status" value="1"/>
</dbReference>
<dbReference type="PANTHER" id="PTHR43757">
    <property type="entry name" value="AMINOMETHYLTRANSFERASE"/>
    <property type="match status" value="1"/>
</dbReference>
<dbReference type="PANTHER" id="PTHR43757:SF2">
    <property type="entry name" value="AMINOMETHYLTRANSFERASE, MITOCHONDRIAL"/>
    <property type="match status" value="1"/>
</dbReference>
<dbReference type="Pfam" id="PF01571">
    <property type="entry name" value="GCV_T"/>
    <property type="match status" value="1"/>
</dbReference>
<dbReference type="Pfam" id="PF08669">
    <property type="entry name" value="GCV_T_C"/>
    <property type="match status" value="1"/>
</dbReference>
<dbReference type="PIRSF" id="PIRSF006487">
    <property type="entry name" value="GcvT"/>
    <property type="match status" value="1"/>
</dbReference>
<dbReference type="SUPFAM" id="SSF101790">
    <property type="entry name" value="Aminomethyltransferase beta-barrel domain"/>
    <property type="match status" value="1"/>
</dbReference>
<dbReference type="SUPFAM" id="SSF103025">
    <property type="entry name" value="Folate-binding domain"/>
    <property type="match status" value="1"/>
</dbReference>
<organism>
    <name type="scientific">Clostridium botulinum (strain Loch Maree / Type A3)</name>
    <dbReference type="NCBI Taxonomy" id="498214"/>
    <lineage>
        <taxon>Bacteria</taxon>
        <taxon>Bacillati</taxon>
        <taxon>Bacillota</taxon>
        <taxon>Clostridia</taxon>
        <taxon>Eubacteriales</taxon>
        <taxon>Clostridiaceae</taxon>
        <taxon>Clostridium</taxon>
    </lineage>
</organism>